<keyword id="KW-0472">Membrane</keyword>
<keyword id="KW-0496">Mitochondrion</keyword>
<keyword id="KW-1185">Reference proteome</keyword>
<keyword id="KW-0812">Transmembrane</keyword>
<keyword id="KW-1133">Transmembrane helix</keyword>
<name>YM001_NEUCR</name>
<proteinExistence type="inferred from homology"/>
<organism>
    <name type="scientific">Neurospora crassa (strain ATCC 24698 / 74-OR23-1A / CBS 708.71 / DSM 1257 / FGSC 987)</name>
    <dbReference type="NCBI Taxonomy" id="367110"/>
    <lineage>
        <taxon>Eukaryota</taxon>
        <taxon>Fungi</taxon>
        <taxon>Dikarya</taxon>
        <taxon>Ascomycota</taxon>
        <taxon>Pezizomycotina</taxon>
        <taxon>Sordariomycetes</taxon>
        <taxon>Sordariomycetidae</taxon>
        <taxon>Sordariales</taxon>
        <taxon>Sordariaceae</taxon>
        <taxon>Neurospora</taxon>
    </lineage>
</organism>
<dbReference type="EMBL" id="X13337">
    <property type="protein sequence ID" value="CAA31719.1"/>
    <property type="status" value="ALT_FRAME"/>
    <property type="molecule type" value="Genomic_DNA"/>
</dbReference>
<dbReference type="EMBL" id="KC683708">
    <property type="protein sequence ID" value="AGG15990.1"/>
    <property type="molecule type" value="Genomic_DNA"/>
</dbReference>
<dbReference type="PIR" id="S04555">
    <property type="entry name" value="S04555"/>
</dbReference>
<dbReference type="RefSeq" id="YP_009126702.1">
    <property type="nucleotide sequence ID" value="NC_026614.1"/>
</dbReference>
<dbReference type="SMR" id="Q35137"/>
<dbReference type="STRING" id="367110.Q35137"/>
<dbReference type="EnsemblFungi" id="AGG15990">
    <property type="protein sequence ID" value="AGG15990"/>
    <property type="gene ID" value="NCU16001"/>
</dbReference>
<dbReference type="GeneID" id="23681528"/>
<dbReference type="KEGG" id="ncr:NCU16001"/>
<dbReference type="VEuPathDB" id="FungiDB:NCU16001"/>
<dbReference type="InParanoid" id="Q35137"/>
<dbReference type="OrthoDB" id="3557146at2759"/>
<dbReference type="Proteomes" id="UP000001805">
    <property type="component" value="Mitochondrion"/>
</dbReference>
<dbReference type="GO" id="GO:0031966">
    <property type="term" value="C:mitochondrial membrane"/>
    <property type="evidence" value="ECO:0007669"/>
    <property type="project" value="UniProtKB-SubCell"/>
</dbReference>
<evidence type="ECO:0000255" key="1"/>
<evidence type="ECO:0000305" key="2"/>
<geneLocation type="mitochondrion"/>
<gene>
    <name type="ORF">NCU16001</name>
</gene>
<accession>Q35137</accession>
<accession>M1RV18</accession>
<reference key="1">
    <citation type="journal article" date="1989" name="Curr. Genet.">
        <title>Duplication of tRNA-met (m) and tRNA-cys genes and of fragments of a gene encoding a subunit of the NADH dehydrogenase complex in neurospora grassa mitochondrial DNA.</title>
        <authorList>
            <person name="Agsteribbe E."/>
            <person name="Hartog M."/>
            <person name="de Vries H."/>
        </authorList>
    </citation>
    <scope>NUCLEOTIDE SEQUENCE [GENOMIC DNA]</scope>
    <source>
        <strain>ATCC 24698 / 74-OR23-1A / CBS 708.71 / DSM 1257 / FGSC 987</strain>
    </source>
</reference>
<reference key="2">
    <citation type="journal article" date="2003" name="Nature">
        <title>The genome sequence of the filamentous fungus Neurospora crassa.</title>
        <authorList>
            <person name="Galagan J.E."/>
            <person name="Calvo S.E."/>
            <person name="Borkovich K.A."/>
            <person name="Selker E.U."/>
            <person name="Read N.D."/>
            <person name="Jaffe D.B."/>
            <person name="FitzHugh W."/>
            <person name="Ma L.-J."/>
            <person name="Smirnov S."/>
            <person name="Purcell S."/>
            <person name="Rehman B."/>
            <person name="Elkins T."/>
            <person name="Engels R."/>
            <person name="Wang S."/>
            <person name="Nielsen C.B."/>
            <person name="Butler J."/>
            <person name="Endrizzi M."/>
            <person name="Qui D."/>
            <person name="Ianakiev P."/>
            <person name="Bell-Pedersen D."/>
            <person name="Nelson M.A."/>
            <person name="Werner-Washburne M."/>
            <person name="Selitrennikoff C.P."/>
            <person name="Kinsey J.A."/>
            <person name="Braun E.L."/>
            <person name="Zelter A."/>
            <person name="Schulte U."/>
            <person name="Kothe G.O."/>
            <person name="Jedd G."/>
            <person name="Mewes H.-W."/>
            <person name="Staben C."/>
            <person name="Marcotte E."/>
            <person name="Greenberg D."/>
            <person name="Roy A."/>
            <person name="Foley K."/>
            <person name="Naylor J."/>
            <person name="Stange-Thomann N."/>
            <person name="Barrett R."/>
            <person name="Gnerre S."/>
            <person name="Kamal M."/>
            <person name="Kamvysselis M."/>
            <person name="Mauceli E.W."/>
            <person name="Bielke C."/>
            <person name="Rudd S."/>
            <person name="Frishman D."/>
            <person name="Krystofova S."/>
            <person name="Rasmussen C."/>
            <person name="Metzenberg R.L."/>
            <person name="Perkins D.D."/>
            <person name="Kroken S."/>
            <person name="Cogoni C."/>
            <person name="Macino G."/>
            <person name="Catcheside D.E.A."/>
            <person name="Li W."/>
            <person name="Pratt R.J."/>
            <person name="Osmani S.A."/>
            <person name="DeSouza C.P.C."/>
            <person name="Glass N.L."/>
            <person name="Orbach M.J."/>
            <person name="Berglund J.A."/>
            <person name="Voelker R."/>
            <person name="Yarden O."/>
            <person name="Plamann M."/>
            <person name="Seiler S."/>
            <person name="Dunlap J.C."/>
            <person name="Radford A."/>
            <person name="Aramayo R."/>
            <person name="Natvig D.O."/>
            <person name="Alex L.A."/>
            <person name="Mannhaupt G."/>
            <person name="Ebbole D.J."/>
            <person name="Freitag M."/>
            <person name="Paulsen I."/>
            <person name="Sachs M.S."/>
            <person name="Lander E.S."/>
            <person name="Nusbaum C."/>
            <person name="Birren B.W."/>
        </authorList>
    </citation>
    <scope>NUCLEOTIDE SEQUENCE [LARGE SCALE GENOMIC DNA]</scope>
    <source>
        <strain>ATCC 24698 / 74-OR23-1A / CBS 708.71 / DSM 1257 / FGSC 987</strain>
    </source>
</reference>
<reference key="3">
    <citation type="book" date="2004" name="The Mycota II, Genetics and Biotechnology (2nd edition)">
        <title>Mitochondrial genetics of Neurospora.</title>
        <editorList>
            <person name="Kueck U."/>
        </editorList>
        <authorList>
            <person name="Kennell J.C."/>
            <person name="Collins R.A."/>
            <person name="Griffiths A.J.F."/>
            <person name="Nargang F.E."/>
        </authorList>
    </citation>
    <scope>GENOME REANNOTATION</scope>
    <source>
        <strain>ATCC 24698 / 74-OR23-1A / CBS 708.71 / DSM 1257 / FGSC 987</strain>
    </source>
</reference>
<protein>
    <recommendedName>
        <fullName>Putative uncharacterized mitochondrial protein NCU16001</fullName>
    </recommendedName>
</protein>
<feature type="chain" id="PRO_0000414739" description="Putative uncharacterized mitochondrial protein NCU16001">
    <location>
        <begin position="1"/>
        <end position="234"/>
    </location>
</feature>
<feature type="transmembrane region" description="Helical" evidence="1">
    <location>
        <begin position="28"/>
        <end position="48"/>
    </location>
</feature>
<feature type="transmembrane region" description="Helical" evidence="1">
    <location>
        <begin position="67"/>
        <end position="87"/>
    </location>
</feature>
<feature type="transmembrane region" description="Helical" evidence="1">
    <location>
        <begin position="123"/>
        <end position="143"/>
    </location>
</feature>
<feature type="transmembrane region" description="Helical" evidence="1">
    <location>
        <begin position="154"/>
        <end position="174"/>
    </location>
</feature>
<feature type="sequence conflict" description="In Ref. 1; CAA31719." evidence="2" ref="1">
    <original>G</original>
    <variation>C</variation>
    <location>
        <position position="56"/>
    </location>
</feature>
<feature type="sequence conflict" description="In Ref. 1; CAA31719." evidence="2" ref="1">
    <original>R</original>
    <variation>K</variation>
    <location>
        <position position="121"/>
    </location>
</feature>
<comment type="subcellular location">
    <subcellularLocation>
        <location evidence="2">Mitochondrion membrane</location>
        <topology evidence="2">Multi-pass membrane protein</topology>
    </subcellularLocation>
</comment>
<comment type="miscellaneous">
    <text>Could be the product of a pseudogene. Product of a duplication of 2 fragments of the ndh-2 gene in the mitochondrial DNA. These 2 fragments, which are not contiguous in the ndh-2 gene, are connected to each other by a palindromic sequence of 37 bp and together they constitute an open reading frame.</text>
</comment>
<comment type="similarity">
    <text evidence="2">Belongs to the complex I subunit 2 family.</text>
</comment>
<comment type="sequence caution" evidence="2">
    <conflict type="frameshift">
        <sequence resource="EMBL-CDS" id="CAA31719"/>
    </conflict>
</comment>
<sequence length="234" mass="26276">MIIMTILSLLLTNAVTLRRDISILFNRIVIIALIYCILHDTMSLSIISKGVGLHGGLLHITNITQVFQIFIFLISILILQLTSFDPIKKFYIMRHPRFINKWPRAIGYSIPLSTPLPPPLRGGGVDLFILLDACLLWANSGTISRSPDFIITKLYCIFHCSFILLGLGVGGLLYGSSTTSLDGLYIINSIQSHVNYSIINPLYRHFNKIQIKMLNNKFLRLSMGAILAHANYDT</sequence>